<comment type="function">
    <text evidence="3 4 5">Catalyzes the deacylation of acyl-homoserine lactone (AHL or acyl-HSL), releasing homoserine lactone (HSL) and the corresponding fatty acid. Possesses a specificity for the degradation of long-chain acyl-HSLs (side chains of 11 to 14 carbons in length). Degrades 3-oxo-C12-HSL, one of the two main AHL signal molecules of P.aeruginosa, and thereby functions as a quorum quencher, inhibiting the las quorum-sensing system. Therefore, may enable P.aeruginosa to modulate its own quorum-sensing-dependent pathogenic potential. Also appears to be required for pyoverdin biosynthesis.</text>
</comment>
<comment type="catalytic activity">
    <reaction>
        <text>an N-acyl-L-homoserine lactone + H2O = L-homoserine lactone + a carboxylate</text>
        <dbReference type="Rhea" id="RHEA:18937"/>
        <dbReference type="ChEBI" id="CHEBI:15377"/>
        <dbReference type="ChEBI" id="CHEBI:29067"/>
        <dbReference type="ChEBI" id="CHEBI:55474"/>
        <dbReference type="ChEBI" id="CHEBI:58633"/>
        <dbReference type="EC" id="3.5.1.97"/>
    </reaction>
</comment>
<comment type="subunit">
    <text evidence="5">Heterodimer of an alpha subunit and a beta subunit processed from the same precursor.</text>
</comment>
<comment type="interaction">
    <interactant intactId="EBI-15828240">
        <id>Q9I194</id>
    </interactant>
    <interactant intactId="EBI-15828240">
        <id>Q9I194</id>
        <label>pvdQ</label>
    </interactant>
    <organismsDiffer>false</organismsDiffer>
    <experiments>3</experiments>
</comment>
<comment type="subcellular location">
    <subcellularLocation>
        <location evidence="6">Periplasm</location>
    </subcellularLocation>
</comment>
<comment type="induction">
    <text evidence="2">Up-regulated under iron starvation conditions.</text>
</comment>
<comment type="mass spectrometry" mass="18574.0" method="Electrospray" evidence="5">
    <molecule>Acyl-homoserine lactone acylase PvdQ subunit alpha</molecule>
</comment>
<comment type="mass spectrometry" mass="60426.0" method="Electrospray" evidence="5">
    <molecule>Acyl-homoserine lactone acylase PvdQ subunit beta</molecule>
</comment>
<comment type="miscellaneous">
    <text>A variable cleavage site between the alpha-subunit and the spacer peptide was observed: Ala-194 may be a part of the alpha-subunit or the spacer peptide. This step of the maturation process may not be very specific.</text>
</comment>
<comment type="miscellaneous">
    <text>AHL-mediated signaling mediates quorum sensing in many species of Proteobacteria, regulating hundreds of genes, including many that code for extracellular virulence factors.</text>
</comment>
<comment type="similarity">
    <text evidence="6">Belongs to the peptidase S45 family.</text>
</comment>
<evidence type="ECO:0000250" key="1"/>
<evidence type="ECO:0000269" key="2">
    <source>
    </source>
</evidence>
<evidence type="ECO:0000269" key="3">
    <source>
    </source>
</evidence>
<evidence type="ECO:0000269" key="4">
    <source>
    </source>
</evidence>
<evidence type="ECO:0000269" key="5">
    <source>
    </source>
</evidence>
<evidence type="ECO:0000305" key="6"/>
<evidence type="ECO:0007829" key="7">
    <source>
        <dbReference type="PDB" id="2WYE"/>
    </source>
</evidence>
<evidence type="ECO:0007829" key="8">
    <source>
        <dbReference type="PDB" id="3L91"/>
    </source>
</evidence>
<evidence type="ECO:0007829" key="9">
    <source>
        <dbReference type="PDB" id="3L94"/>
    </source>
</evidence>
<evidence type="ECO:0007829" key="10">
    <source>
        <dbReference type="PDB" id="3SRC"/>
    </source>
</evidence>
<evidence type="ECO:0007829" key="11">
    <source>
        <dbReference type="PDB" id="4WKS"/>
    </source>
</evidence>
<reference key="1">
    <citation type="journal article" date="2000" name="Nature">
        <title>Complete genome sequence of Pseudomonas aeruginosa PAO1, an opportunistic pathogen.</title>
        <authorList>
            <person name="Stover C.K."/>
            <person name="Pham X.-Q.T."/>
            <person name="Erwin A.L."/>
            <person name="Mizoguchi S.D."/>
            <person name="Warrener P."/>
            <person name="Hickey M.J."/>
            <person name="Brinkman F.S.L."/>
            <person name="Hufnagle W.O."/>
            <person name="Kowalik D.J."/>
            <person name="Lagrou M."/>
            <person name="Garber R.L."/>
            <person name="Goltry L."/>
            <person name="Tolentino E."/>
            <person name="Westbrock-Wadman S."/>
            <person name="Yuan Y."/>
            <person name="Brody L.L."/>
            <person name="Coulter S.N."/>
            <person name="Folger K.R."/>
            <person name="Kas A."/>
            <person name="Larbig K."/>
            <person name="Lim R.M."/>
            <person name="Smith K.A."/>
            <person name="Spencer D.H."/>
            <person name="Wong G.K.-S."/>
            <person name="Wu Z."/>
            <person name="Paulsen I.T."/>
            <person name="Reizer J."/>
            <person name="Saier M.H. Jr."/>
            <person name="Hancock R.E.W."/>
            <person name="Lory S."/>
            <person name="Olson M.V."/>
        </authorList>
    </citation>
    <scope>NUCLEOTIDE SEQUENCE [LARGE SCALE GENOMIC DNA]</scope>
    <source>
        <strain>ATCC 15692 / DSM 22644 / CIP 104116 / JCM 14847 / LMG 12228 / 1C / PRS 101 / PAO1</strain>
    </source>
</reference>
<reference key="2">
    <citation type="journal article" date="2006" name="Infect. Immun.">
        <title>Quorum quenching by an N-acyl-homoserine lactone acylase from Pseudomonas aeruginosa PAO1.</title>
        <authorList>
            <person name="Sio C.F."/>
            <person name="Otten L.G."/>
            <person name="Cool R.H."/>
            <person name="Diggle S.P."/>
            <person name="Braun P.G."/>
            <person name="Bos R."/>
            <person name="Daykin M."/>
            <person name="Camara M."/>
            <person name="Williams P."/>
            <person name="Quax W.J."/>
        </authorList>
    </citation>
    <scope>PROTEIN SEQUENCE OF 24-28 AND 217-221</scope>
    <scope>FUNCTION</scope>
    <scope>SUBSTRATE SPECIFICITY</scope>
    <scope>MASS SPECTROMETRY</scope>
    <scope>SUBUNIT</scope>
    <source>
        <strain>ATCC 15692 / DSM 22644 / CIP 104116 / JCM 14847 / LMG 12228 / 1C / PRS 101 / PAO1</strain>
    </source>
</reference>
<reference key="3">
    <citation type="journal article" date="2002" name="Mol. Microbiol.">
        <title>GeneChip expression analysis of the iron starvation response in Pseudomonas aeruginosa: identification of novel pyoverdine biosynthesis genes.</title>
        <authorList>
            <person name="Ochsner U.A."/>
            <person name="Wilderman P.J."/>
            <person name="Vasil A.I."/>
            <person name="Vasil M.L."/>
        </authorList>
    </citation>
    <scope>INDUCTION</scope>
    <source>
        <strain>ATCC 15692 / DSM 22644 / CIP 104116 / JCM 14847 / LMG 12228 / 1C / PRS 101 / PAO1</strain>
    </source>
</reference>
<reference key="4">
    <citation type="journal article" date="2003" name="Appl. Environ. Microbiol.">
        <title>Utilization of acyl-homoserine lactone quorum signals for growth by a soil pseudomonad and Pseudomonas aeruginosa PAO1.</title>
        <authorList>
            <person name="Huang J.J."/>
            <person name="Han J.-I."/>
            <person name="Zhang L.-H."/>
            <person name="Leadbetter J.R."/>
        </authorList>
    </citation>
    <scope>FUNCTION</scope>
    <source>
        <strain>ATCC 15692 / DSM 22644 / CIP 104116 / JCM 14847 / LMG 12228 / 1C / PRS 101 / PAO1</strain>
    </source>
</reference>
<reference key="5">
    <citation type="journal article" date="2003" name="Microbiology">
        <title>Identification and characterization of novel pyoverdine synthesis genes in Pseudomonas aeruginosa.</title>
        <authorList>
            <person name="Lamont I.L."/>
            <person name="Martin L.W."/>
        </authorList>
    </citation>
    <scope>GENE NAME</scope>
    <scope>ROLE IN PYOVERDIN BIOSYNTHESIS</scope>
</reference>
<feature type="signal peptide" evidence="5">
    <location>
        <begin position="1"/>
        <end position="23"/>
    </location>
</feature>
<feature type="chain" id="PRO_0000253353" description="Acyl-homoserine lactone acylase PvdQ">
    <location>
        <begin position="24"/>
        <end position="762"/>
    </location>
</feature>
<feature type="chain" id="PRO_0000253354" description="Acyl-homoserine lactone acylase PvdQ subunit alpha">
    <location>
        <begin position="24"/>
        <end position="193"/>
    </location>
</feature>
<feature type="propeptide" id="PRO_0000253355" description="Spacer peptide" evidence="5">
    <location>
        <begin position="194"/>
        <end position="216"/>
    </location>
</feature>
<feature type="chain" id="PRO_0000253356" description="Acyl-homoserine lactone acylase PvdQ subunit beta">
    <location>
        <begin position="217"/>
        <end position="762"/>
    </location>
</feature>
<feature type="active site" description="Nucleophile" evidence="1">
    <location>
        <position position="217"/>
    </location>
</feature>
<feature type="strand" evidence="11">
    <location>
        <begin position="31"/>
        <end position="38"/>
    </location>
</feature>
<feature type="helix" evidence="11">
    <location>
        <begin position="39"/>
        <end position="41"/>
    </location>
</feature>
<feature type="strand" evidence="11">
    <location>
        <begin position="42"/>
        <end position="46"/>
    </location>
</feature>
<feature type="helix" evidence="11">
    <location>
        <begin position="50"/>
        <end position="76"/>
    </location>
</feature>
<feature type="helix" evidence="11">
    <location>
        <begin position="80"/>
        <end position="84"/>
    </location>
</feature>
<feature type="strand" evidence="10">
    <location>
        <begin position="86"/>
        <end position="89"/>
    </location>
</feature>
<feature type="helix" evidence="11">
    <location>
        <begin position="96"/>
        <end position="106"/>
    </location>
</feature>
<feature type="helix" evidence="11">
    <location>
        <begin position="109"/>
        <end position="117"/>
    </location>
</feature>
<feature type="helix" evidence="11">
    <location>
        <begin position="121"/>
        <end position="140"/>
    </location>
</feature>
<feature type="strand" evidence="11">
    <location>
        <begin position="143"/>
        <end position="145"/>
    </location>
</feature>
<feature type="turn" evidence="8">
    <location>
        <begin position="147"/>
        <end position="150"/>
    </location>
</feature>
<feature type="helix" evidence="11">
    <location>
        <begin position="159"/>
        <end position="170"/>
    </location>
</feature>
<feature type="helix" evidence="11">
    <location>
        <begin position="171"/>
        <end position="173"/>
    </location>
</feature>
<feature type="helix" evidence="11">
    <location>
        <begin position="175"/>
        <end position="178"/>
    </location>
</feature>
<feature type="helix" evidence="11">
    <location>
        <begin position="179"/>
        <end position="184"/>
    </location>
</feature>
<feature type="strand" evidence="11">
    <location>
        <begin position="218"/>
        <end position="222"/>
    </location>
</feature>
<feature type="turn" evidence="11">
    <location>
        <begin position="224"/>
        <end position="226"/>
    </location>
</feature>
<feature type="strand" evidence="11">
    <location>
        <begin position="233"/>
        <end position="237"/>
    </location>
</feature>
<feature type="strand" evidence="11">
    <location>
        <begin position="239"/>
        <end position="243"/>
    </location>
</feature>
<feature type="helix" evidence="11">
    <location>
        <begin position="244"/>
        <end position="246"/>
    </location>
</feature>
<feature type="strand" evidence="11">
    <location>
        <begin position="249"/>
        <end position="255"/>
    </location>
</feature>
<feature type="turn" evidence="11">
    <location>
        <begin position="256"/>
        <end position="258"/>
    </location>
</feature>
<feature type="strand" evidence="11">
    <location>
        <begin position="259"/>
        <end position="265"/>
    </location>
</feature>
<feature type="strand" evidence="11">
    <location>
        <begin position="273"/>
        <end position="276"/>
    </location>
</feature>
<feature type="strand" evidence="11">
    <location>
        <begin position="278"/>
        <end position="286"/>
    </location>
</feature>
<feature type="strand" evidence="11">
    <location>
        <begin position="291"/>
        <end position="300"/>
    </location>
</feature>
<feature type="strand" evidence="11">
    <location>
        <begin position="303"/>
        <end position="309"/>
    </location>
</feature>
<feature type="strand" evidence="11">
    <location>
        <begin position="312"/>
        <end position="315"/>
    </location>
</feature>
<feature type="strand" evidence="11">
    <location>
        <begin position="317"/>
        <end position="326"/>
    </location>
</feature>
<feature type="strand" evidence="11">
    <location>
        <begin position="332"/>
        <end position="342"/>
    </location>
</feature>
<feature type="strand" evidence="11">
    <location>
        <begin position="345"/>
        <end position="348"/>
    </location>
</feature>
<feature type="turn" evidence="11">
    <location>
        <begin position="351"/>
        <end position="353"/>
    </location>
</feature>
<feature type="strand" evidence="11">
    <location>
        <begin position="358"/>
        <end position="366"/>
    </location>
</feature>
<feature type="helix" evidence="11">
    <location>
        <begin position="367"/>
        <end position="370"/>
    </location>
</feature>
<feature type="helix" evidence="11">
    <location>
        <begin position="374"/>
        <end position="382"/>
    </location>
</feature>
<feature type="helix" evidence="11">
    <location>
        <begin position="387"/>
        <end position="397"/>
    </location>
</feature>
<feature type="strand" evidence="11">
    <location>
        <begin position="402"/>
        <end position="409"/>
    </location>
</feature>
<feature type="strand" evidence="11">
    <location>
        <begin position="414"/>
        <end position="417"/>
    </location>
</feature>
<feature type="helix" evidence="11">
    <location>
        <begin position="429"/>
        <end position="433"/>
    </location>
</feature>
<feature type="helix" evidence="11">
    <location>
        <begin position="436"/>
        <end position="440"/>
    </location>
</feature>
<feature type="strand" evidence="11">
    <location>
        <begin position="445"/>
        <end position="447"/>
    </location>
</feature>
<feature type="helix" evidence="11">
    <location>
        <begin position="451"/>
        <end position="453"/>
    </location>
</feature>
<feature type="strand" evidence="11">
    <location>
        <begin position="461"/>
        <end position="463"/>
    </location>
</feature>
<feature type="helix" evidence="11">
    <location>
        <begin position="469"/>
        <end position="471"/>
    </location>
</feature>
<feature type="strand" evidence="11">
    <location>
        <begin position="474"/>
        <end position="486"/>
    </location>
</feature>
<feature type="helix" evidence="9">
    <location>
        <begin position="488"/>
        <end position="490"/>
    </location>
</feature>
<feature type="turn" evidence="11">
    <location>
        <begin position="502"/>
        <end position="504"/>
    </location>
</feature>
<feature type="helix" evidence="11">
    <location>
        <begin position="512"/>
        <end position="521"/>
    </location>
</feature>
<feature type="strand" evidence="11">
    <location>
        <begin position="523"/>
        <end position="525"/>
    </location>
</feature>
<feature type="helix" evidence="11">
    <location>
        <begin position="529"/>
        <end position="537"/>
    </location>
</feature>
<feature type="helix" evidence="11">
    <location>
        <begin position="543"/>
        <end position="556"/>
    </location>
</feature>
<feature type="turn" evidence="11">
    <location>
        <begin position="557"/>
        <end position="560"/>
    </location>
</feature>
<feature type="helix" evidence="11">
    <location>
        <begin position="562"/>
        <end position="564"/>
    </location>
</feature>
<feature type="helix" evidence="11">
    <location>
        <begin position="565"/>
        <end position="573"/>
    </location>
</feature>
<feature type="helix" evidence="11">
    <location>
        <begin position="585"/>
        <end position="596"/>
    </location>
</feature>
<feature type="strand" evidence="11">
    <location>
        <begin position="599"/>
        <end position="601"/>
    </location>
</feature>
<feature type="strand" evidence="11">
    <location>
        <begin position="603"/>
        <end position="605"/>
    </location>
</feature>
<feature type="turn" evidence="11">
    <location>
        <begin position="612"/>
        <end position="614"/>
    </location>
</feature>
<feature type="strand" evidence="11">
    <location>
        <begin position="616"/>
        <end position="619"/>
    </location>
</feature>
<feature type="helix" evidence="11">
    <location>
        <begin position="624"/>
        <end position="643"/>
    </location>
</feature>
<feature type="helix" evidence="11">
    <location>
        <begin position="652"/>
        <end position="655"/>
    </location>
</feature>
<feature type="strand" evidence="11">
    <location>
        <begin position="656"/>
        <end position="660"/>
    </location>
</feature>
<feature type="strand" evidence="11">
    <location>
        <begin position="663"/>
        <end position="666"/>
    </location>
</feature>
<feature type="helix" evidence="11">
    <location>
        <begin position="672"/>
        <end position="674"/>
    </location>
</feature>
<feature type="strand" evidence="11">
    <location>
        <begin position="676"/>
        <end position="685"/>
    </location>
</feature>
<feature type="strand" evidence="11">
    <location>
        <begin position="688"/>
        <end position="695"/>
    </location>
</feature>
<feature type="strand" evidence="11">
    <location>
        <begin position="697"/>
        <end position="702"/>
    </location>
</feature>
<feature type="strand" evidence="11">
    <location>
        <begin position="709"/>
        <end position="714"/>
    </location>
</feature>
<feature type="helix" evidence="11">
    <location>
        <begin position="729"/>
        <end position="735"/>
    </location>
</feature>
<feature type="strand" evidence="7">
    <location>
        <begin position="740"/>
        <end position="742"/>
    </location>
</feature>
<feature type="helix" evidence="11">
    <location>
        <begin position="746"/>
        <end position="750"/>
    </location>
</feature>
<feature type="strand" evidence="11">
    <location>
        <begin position="756"/>
        <end position="762"/>
    </location>
</feature>
<keyword id="KW-0002">3D-structure</keyword>
<keyword id="KW-0903">Direct protein sequencing</keyword>
<keyword id="KW-0378">Hydrolase</keyword>
<keyword id="KW-0574">Periplasm</keyword>
<keyword id="KW-0673">Quorum sensing</keyword>
<keyword id="KW-1185">Reference proteome</keyword>
<keyword id="KW-0732">Signal</keyword>
<keyword id="KW-0865">Zymogen</keyword>
<dbReference type="EC" id="3.5.1.97"/>
<dbReference type="EMBL" id="AE004091">
    <property type="protein sequence ID" value="AAG05773.1"/>
    <property type="molecule type" value="Genomic_DNA"/>
</dbReference>
<dbReference type="PIR" id="H83348">
    <property type="entry name" value="H83348"/>
</dbReference>
<dbReference type="RefSeq" id="NP_251075.1">
    <property type="nucleotide sequence ID" value="NC_002516.2"/>
</dbReference>
<dbReference type="RefSeq" id="WP_003115642.1">
    <property type="nucleotide sequence ID" value="NZ_QZGE01000021.1"/>
</dbReference>
<dbReference type="PDB" id="2WYB">
    <property type="method" value="X-ray"/>
    <property type="resolution" value="2.10 A"/>
    <property type="chains" value="A=24-193, B=217-762"/>
</dbReference>
<dbReference type="PDB" id="2WYC">
    <property type="method" value="X-ray"/>
    <property type="resolution" value="1.90 A"/>
    <property type="chains" value="A=24-193, B=217-762"/>
</dbReference>
<dbReference type="PDB" id="2WYD">
    <property type="method" value="X-ray"/>
    <property type="resolution" value="1.90 A"/>
    <property type="chains" value="A=24-193, B=217-762"/>
</dbReference>
<dbReference type="PDB" id="2WYE">
    <property type="method" value="X-ray"/>
    <property type="resolution" value="1.80 A"/>
    <property type="chains" value="A=24-193, B=217-762"/>
</dbReference>
<dbReference type="PDB" id="3L91">
    <property type="method" value="X-ray"/>
    <property type="resolution" value="1.66 A"/>
    <property type="chains" value="A=24-193, B=217-762"/>
</dbReference>
<dbReference type="PDB" id="3L94">
    <property type="method" value="X-ray"/>
    <property type="resolution" value="1.95 A"/>
    <property type="chains" value="A=24-193, B=217-762"/>
</dbReference>
<dbReference type="PDB" id="3SRA">
    <property type="method" value="X-ray"/>
    <property type="resolution" value="2.30 A"/>
    <property type="chains" value="A=29-191, B=217-762"/>
</dbReference>
<dbReference type="PDB" id="3SRB">
    <property type="method" value="X-ray"/>
    <property type="resolution" value="1.80 A"/>
    <property type="chains" value="A=29-191, B=217-762"/>
</dbReference>
<dbReference type="PDB" id="3SRC">
    <property type="method" value="X-ray"/>
    <property type="resolution" value="2.00 A"/>
    <property type="chains" value="A=29-192, B=217-762"/>
</dbReference>
<dbReference type="PDB" id="4BTH">
    <property type="method" value="X-ray"/>
    <property type="resolution" value="1.90 A"/>
    <property type="chains" value="A=24-193, B=217-762"/>
</dbReference>
<dbReference type="PDB" id="4K2F">
    <property type="method" value="X-ray"/>
    <property type="resolution" value="1.99 A"/>
    <property type="chains" value="A=24-193, B=217-762"/>
</dbReference>
<dbReference type="PDB" id="4K2G">
    <property type="method" value="X-ray"/>
    <property type="resolution" value="2.30 A"/>
    <property type="chains" value="A=24-193, B=217-762"/>
</dbReference>
<dbReference type="PDB" id="4M1J">
    <property type="method" value="X-ray"/>
    <property type="resolution" value="1.80 A"/>
    <property type="chains" value="A=28-192, C=217-762"/>
</dbReference>
<dbReference type="PDB" id="4WKS">
    <property type="method" value="X-ray"/>
    <property type="resolution" value="1.63 A"/>
    <property type="chains" value="A=28-192, C=217-762"/>
</dbReference>
<dbReference type="PDB" id="4WKT">
    <property type="method" value="X-ray"/>
    <property type="resolution" value="1.78 A"/>
    <property type="chains" value="A=28-192, C=217-762"/>
</dbReference>
<dbReference type="PDB" id="4WKU">
    <property type="method" value="X-ray"/>
    <property type="resolution" value="2.00 A"/>
    <property type="chains" value="A=28-192, B=217-762"/>
</dbReference>
<dbReference type="PDB" id="4WKV">
    <property type="method" value="X-ray"/>
    <property type="resolution" value="2.14 A"/>
    <property type="chains" value="A=28-192, C=217-762"/>
</dbReference>
<dbReference type="PDB" id="5UBK">
    <property type="method" value="X-ray"/>
    <property type="resolution" value="2.55 A"/>
    <property type="chains" value="A=217-762"/>
</dbReference>
<dbReference type="PDB" id="5UBL">
    <property type="method" value="X-ray"/>
    <property type="resolution" value="1.80 A"/>
    <property type="chains" value="A=217-762"/>
</dbReference>
<dbReference type="PDBsum" id="2WYB"/>
<dbReference type="PDBsum" id="2WYC"/>
<dbReference type="PDBsum" id="2WYD"/>
<dbReference type="PDBsum" id="2WYE"/>
<dbReference type="PDBsum" id="3L91"/>
<dbReference type="PDBsum" id="3L94"/>
<dbReference type="PDBsum" id="3SRA"/>
<dbReference type="PDBsum" id="3SRB"/>
<dbReference type="PDBsum" id="3SRC"/>
<dbReference type="PDBsum" id="4BTH"/>
<dbReference type="PDBsum" id="4K2F"/>
<dbReference type="PDBsum" id="4K2G"/>
<dbReference type="PDBsum" id="4M1J"/>
<dbReference type="PDBsum" id="4WKS"/>
<dbReference type="PDBsum" id="4WKT"/>
<dbReference type="PDBsum" id="4WKU"/>
<dbReference type="PDBsum" id="4WKV"/>
<dbReference type="PDBsum" id="5UBK"/>
<dbReference type="PDBsum" id="5UBL"/>
<dbReference type="SMR" id="Q9I194"/>
<dbReference type="DIP" id="DIP-58522N"/>
<dbReference type="STRING" id="208964.PA2385"/>
<dbReference type="BindingDB" id="Q9I194"/>
<dbReference type="ChEMBL" id="CHEMBL1741161"/>
<dbReference type="DrugBank" id="DB03017">
    <property type="generic name" value="Lauric acid"/>
</dbReference>
<dbReference type="MEROPS" id="S45.004"/>
<dbReference type="PaxDb" id="208964-PA2385"/>
<dbReference type="GeneID" id="882260"/>
<dbReference type="KEGG" id="pae:PA2385"/>
<dbReference type="PATRIC" id="fig|208964.12.peg.2495"/>
<dbReference type="PseudoCAP" id="PA2385"/>
<dbReference type="HOGENOM" id="CLU_017615_0_0_6"/>
<dbReference type="InParanoid" id="Q9I194"/>
<dbReference type="OrthoDB" id="9760084at2"/>
<dbReference type="PhylomeDB" id="Q9I194"/>
<dbReference type="BioCyc" id="MetaCyc:MONOMER-20241"/>
<dbReference type="BioCyc" id="PAER208964:G1FZ6-2423-MONOMER"/>
<dbReference type="BRENDA" id="3.5.1.97">
    <property type="organism ID" value="5087"/>
</dbReference>
<dbReference type="EvolutionaryTrace" id="Q9I194"/>
<dbReference type="PHI-base" id="PHI:4058"/>
<dbReference type="PHI-base" id="PHI:4713"/>
<dbReference type="Proteomes" id="UP000002438">
    <property type="component" value="Chromosome"/>
</dbReference>
<dbReference type="GO" id="GO:0005737">
    <property type="term" value="C:cytoplasm"/>
    <property type="evidence" value="ECO:0000314"/>
    <property type="project" value="PseudoCAP"/>
</dbReference>
<dbReference type="GO" id="GO:0042597">
    <property type="term" value="C:periplasmic space"/>
    <property type="evidence" value="ECO:0007669"/>
    <property type="project" value="UniProtKB-SubCell"/>
</dbReference>
<dbReference type="GO" id="GO:0016811">
    <property type="term" value="F:hydrolase activity, acting on carbon-nitrogen (but not peptide) bonds, in linear amides"/>
    <property type="evidence" value="ECO:0000314"/>
    <property type="project" value="PseudoCAP"/>
</dbReference>
<dbReference type="GO" id="GO:0042802">
    <property type="term" value="F:identical protein binding"/>
    <property type="evidence" value="ECO:0000353"/>
    <property type="project" value="IntAct"/>
</dbReference>
<dbReference type="GO" id="GO:0016937">
    <property type="term" value="F:short-chain fatty acyl-CoA dehydrogenase activity"/>
    <property type="evidence" value="ECO:0000315"/>
    <property type="project" value="PseudoCAP"/>
</dbReference>
<dbReference type="GO" id="GO:0017000">
    <property type="term" value="P:antibiotic biosynthetic process"/>
    <property type="evidence" value="ECO:0007669"/>
    <property type="project" value="InterPro"/>
</dbReference>
<dbReference type="GO" id="GO:0071978">
    <property type="term" value="P:bacterial-type flagellum-dependent swarming motility"/>
    <property type="evidence" value="ECO:0000315"/>
    <property type="project" value="PseudoCAP"/>
</dbReference>
<dbReference type="GO" id="GO:0002049">
    <property type="term" value="P:pyoverdine biosynthetic process"/>
    <property type="evidence" value="ECO:0000314"/>
    <property type="project" value="PseudoCAP"/>
</dbReference>
<dbReference type="GO" id="GO:0009372">
    <property type="term" value="P:quorum sensing"/>
    <property type="evidence" value="ECO:0007669"/>
    <property type="project" value="UniProtKB-KW"/>
</dbReference>
<dbReference type="GO" id="GO:0046677">
    <property type="term" value="P:response to antibiotic"/>
    <property type="evidence" value="ECO:0000315"/>
    <property type="project" value="PseudoCAP"/>
</dbReference>
<dbReference type="GO" id="GO:0044010">
    <property type="term" value="P:single-species biofilm formation"/>
    <property type="evidence" value="ECO:0000315"/>
    <property type="project" value="PseudoCAP"/>
</dbReference>
<dbReference type="CDD" id="cd01936">
    <property type="entry name" value="Ntn_CA"/>
    <property type="match status" value="1"/>
</dbReference>
<dbReference type="FunFam" id="1.10.439.10:FF:000003">
    <property type="entry name" value="Acyl-homoserine lactone acylase PvdQ"/>
    <property type="match status" value="1"/>
</dbReference>
<dbReference type="Gene3D" id="1.10.1400.10">
    <property type="match status" value="1"/>
</dbReference>
<dbReference type="Gene3D" id="2.30.120.10">
    <property type="match status" value="1"/>
</dbReference>
<dbReference type="Gene3D" id="3.60.20.10">
    <property type="entry name" value="Glutamine Phosphoribosylpyrophosphate, subunit 1, domain 1"/>
    <property type="match status" value="1"/>
</dbReference>
<dbReference type="Gene3D" id="1.10.439.10">
    <property type="entry name" value="Penicillin Amidohydrolase, domain 1"/>
    <property type="match status" value="1"/>
</dbReference>
<dbReference type="InterPro" id="IPR029055">
    <property type="entry name" value="Ntn_hydrolases_N"/>
</dbReference>
<dbReference type="InterPro" id="IPR014395">
    <property type="entry name" value="Pen/GL7ACA/AHL_acylase"/>
</dbReference>
<dbReference type="InterPro" id="IPR043147">
    <property type="entry name" value="Penicillin_amidase_A-knob"/>
</dbReference>
<dbReference type="InterPro" id="IPR023343">
    <property type="entry name" value="Penicillin_amidase_dom1"/>
</dbReference>
<dbReference type="InterPro" id="IPR043146">
    <property type="entry name" value="Penicillin_amidase_N_B-knob"/>
</dbReference>
<dbReference type="InterPro" id="IPR002692">
    <property type="entry name" value="S45"/>
</dbReference>
<dbReference type="PANTHER" id="PTHR34218:SF3">
    <property type="entry name" value="ACYL-HOMOSERINE LACTONE ACYLASE PVDQ"/>
    <property type="match status" value="1"/>
</dbReference>
<dbReference type="PANTHER" id="PTHR34218">
    <property type="entry name" value="PEPTIDASE S45 PENICILLIN AMIDASE"/>
    <property type="match status" value="1"/>
</dbReference>
<dbReference type="Pfam" id="PF01804">
    <property type="entry name" value="Penicil_amidase"/>
    <property type="match status" value="1"/>
</dbReference>
<dbReference type="PIRSF" id="PIRSF001227">
    <property type="entry name" value="Pen_acylase"/>
    <property type="match status" value="1"/>
</dbReference>
<dbReference type="SUPFAM" id="SSF56235">
    <property type="entry name" value="N-terminal nucleophile aminohydrolases (Ntn hydrolases)"/>
    <property type="match status" value="1"/>
</dbReference>
<organism>
    <name type="scientific">Pseudomonas aeruginosa (strain ATCC 15692 / DSM 22644 / CIP 104116 / JCM 14847 / LMG 12228 / 1C / PRS 101 / PAO1)</name>
    <dbReference type="NCBI Taxonomy" id="208964"/>
    <lineage>
        <taxon>Bacteria</taxon>
        <taxon>Pseudomonadati</taxon>
        <taxon>Pseudomonadota</taxon>
        <taxon>Gammaproteobacteria</taxon>
        <taxon>Pseudomonadales</taxon>
        <taxon>Pseudomonadaceae</taxon>
        <taxon>Pseudomonas</taxon>
    </lineage>
</organism>
<gene>
    <name type="primary">pvdQ</name>
    <name type="synonym">qsc112</name>
    <name type="ordered locus">PA2385</name>
</gene>
<proteinExistence type="evidence at protein level"/>
<accession>Q9I194</accession>
<protein>
    <recommendedName>
        <fullName>Acyl-homoserine lactone acylase PvdQ</fullName>
        <shortName>AHL acylase PvdQ</shortName>
        <shortName>Acyl-HSL acylase PvdQ</shortName>
        <ecNumber>3.5.1.97</ecNumber>
    </recommendedName>
    <component>
        <recommendedName>
            <fullName>Acyl-homoserine lactone acylase PvdQ subunit alpha</fullName>
            <shortName>Acyl-HSL acylase PvdQ subunit alpha</shortName>
        </recommendedName>
    </component>
    <component>
        <recommendedName>
            <fullName>Acyl-homoserine lactone acylase PvdQ subunit beta</fullName>
            <shortName>Acyl-HSL acylase PvdQ subunit beta</shortName>
        </recommendedName>
    </component>
</protein>
<sequence length="762" mass="84040">MGMRTVLTGLAGMLLGSMMPVQADMPRPTGLAADIRWTAYGVPHIRAKDERGLGYGIGYAYARDNACLLAEEIVTARGERARYFGSEGKSSAELDNLPSDIFYAWLNQPEALQAFWQAQTPAVRQLLEGYAAGFNRFLREADGKTTSCLGQPWLRAIATDDLLRLTRRLLVEGGVGQFADALVAAAPPGAEKVALSGEQAFQVAEQRRQRFRLERGSNAIAVGSERSADGKGMLLANPHFPWNGAMRFYQMHLTIPGRLDVMGASLPGLPVVNIGFSRHLAWTHTVDTSSHFTLYRLALDPKDPRRYLVDGRSLPLEEKSVAIEVRGADGKLSRVEHKVYQSIYGPLVVWPGKLDWNRSEAYALRDANLENTRVLQQWYSINQASDVADLRRRVEALQGIPWVNTLAADEQGNALYMNQSVVPYLKPELIPACAIPQLVAEGLPALQGQDSRCAWSRDPAAAQAGITPAAQLPVLLRRDFVQNSNDSAWLTNPASPLQGFSPLVSQEKPIGPRARYALSRLQGKQPLEAKTLEEMVTANHVFSADQVLPDLLRLCRDNQGEKSLARACAALAQWDRGANLDSGSGFVYFQRFMQRFAELDGAWKEPFDAQRPLDTPQGIALDRPQVATQVRQALADAAAEVEKSGIPDGARWGDLQVSTRGQERIAIPGGDGHFGVYNAIQSVRKGDHLEVVGGTSYIQLVTFPEEGPKARGLLAFSQSSDPRSPHYRDQTELFSRQQWQTLPFSDRQIDADPQLQRLSIRE</sequence>
<name>PVDQ_PSEAE</name>